<comment type="similarity">
    <text evidence="1">Belongs to the UPF0398 family.</text>
</comment>
<reference key="1">
    <citation type="book" date="2006" name="Gram positive pathogens, 2nd edition">
        <title>The Staphylococcus aureus NCTC 8325 genome.</title>
        <editorList>
            <person name="Fischetti V."/>
            <person name="Novick R."/>
            <person name="Ferretti J."/>
            <person name="Portnoy D."/>
            <person name="Rood J."/>
        </editorList>
        <authorList>
            <person name="Gillaspy A.F."/>
            <person name="Worrell V."/>
            <person name="Orvis J."/>
            <person name="Roe B.A."/>
            <person name="Dyer D.W."/>
            <person name="Iandolo J.J."/>
        </authorList>
    </citation>
    <scope>NUCLEOTIDE SEQUENCE [LARGE SCALE GENOMIC DNA]</scope>
    <source>
        <strain>NCTC 8325 / PS 47</strain>
    </source>
</reference>
<sequence length="187" mass="22191">MVKTVYVTGYKSFELNIFKDDAPEVHYLKQFIKHKIEQLLDEGLEWVLIQGQMGIELWTAEVVIELQRTYDSLKFAVITPFQGHTEKWNEHNQSKYANIIKHADYVDSIFHTSYQGPFQFKQADQFMLEHSDQTLLIYDEEQEASPKFFKQMLVDFMDKTNYTCDIVTFDELTAFINDLQWSEDQSF</sequence>
<protein>
    <recommendedName>
        <fullName evidence="1">UPF0398 protein SAOUHSC_01463</fullName>
    </recommendedName>
</protein>
<dbReference type="EMBL" id="CP000253">
    <property type="protein sequence ID" value="ABD30548.1"/>
    <property type="molecule type" value="Genomic_DNA"/>
</dbReference>
<dbReference type="RefSeq" id="WP_000241308.1">
    <property type="nucleotide sequence ID" value="NZ_LS483365.1"/>
</dbReference>
<dbReference type="RefSeq" id="YP_499981.1">
    <property type="nucleotide sequence ID" value="NC_007795.1"/>
</dbReference>
<dbReference type="SMR" id="Q2FYI4"/>
<dbReference type="STRING" id="93061.SAOUHSC_01463"/>
<dbReference type="PaxDb" id="1280-SAXN108_1468"/>
<dbReference type="GeneID" id="3919905"/>
<dbReference type="KEGG" id="sao:SAOUHSC_01463"/>
<dbReference type="PATRIC" id="fig|93061.5.peg.1332"/>
<dbReference type="eggNOG" id="COG4474">
    <property type="taxonomic scope" value="Bacteria"/>
</dbReference>
<dbReference type="HOGENOM" id="CLU_105319_0_0_9"/>
<dbReference type="OrthoDB" id="2301957at2"/>
<dbReference type="PRO" id="PR:Q2FYI4"/>
<dbReference type="Proteomes" id="UP000008816">
    <property type="component" value="Chromosome"/>
</dbReference>
<dbReference type="Gene3D" id="3.40.50.450">
    <property type="match status" value="1"/>
</dbReference>
<dbReference type="HAMAP" id="MF_01575">
    <property type="entry name" value="UPF0398"/>
    <property type="match status" value="1"/>
</dbReference>
<dbReference type="InterPro" id="IPR010697">
    <property type="entry name" value="YspA"/>
</dbReference>
<dbReference type="NCBIfam" id="NF010181">
    <property type="entry name" value="PRK13660.1"/>
    <property type="match status" value="1"/>
</dbReference>
<dbReference type="PANTHER" id="PTHR38440:SF1">
    <property type="entry name" value="UPF0398 PROTEIN SPR0331"/>
    <property type="match status" value="1"/>
</dbReference>
<dbReference type="PANTHER" id="PTHR38440">
    <property type="entry name" value="UPF0398 PROTEIN YPSA"/>
    <property type="match status" value="1"/>
</dbReference>
<dbReference type="Pfam" id="PF06908">
    <property type="entry name" value="YpsA"/>
    <property type="match status" value="1"/>
</dbReference>
<dbReference type="PIRSF" id="PIRSF021290">
    <property type="entry name" value="DUF1273"/>
    <property type="match status" value="1"/>
</dbReference>
<dbReference type="SUPFAM" id="SSF102405">
    <property type="entry name" value="MCP/YpsA-like"/>
    <property type="match status" value="1"/>
</dbReference>
<proteinExistence type="inferred from homology"/>
<keyword id="KW-1185">Reference proteome</keyword>
<gene>
    <name type="ordered locus">SAOUHSC_01463</name>
</gene>
<accession>Q2FYI4</accession>
<name>Y1463_STAA8</name>
<organism>
    <name type="scientific">Staphylococcus aureus (strain NCTC 8325 / PS 47)</name>
    <dbReference type="NCBI Taxonomy" id="93061"/>
    <lineage>
        <taxon>Bacteria</taxon>
        <taxon>Bacillati</taxon>
        <taxon>Bacillota</taxon>
        <taxon>Bacilli</taxon>
        <taxon>Bacillales</taxon>
        <taxon>Staphylococcaceae</taxon>
        <taxon>Staphylococcus</taxon>
    </lineage>
</organism>
<feature type="chain" id="PRO_0000267175" description="UPF0398 protein SAOUHSC_01463">
    <location>
        <begin position="1"/>
        <end position="187"/>
    </location>
</feature>
<evidence type="ECO:0000255" key="1">
    <source>
        <dbReference type="HAMAP-Rule" id="MF_01575"/>
    </source>
</evidence>